<feature type="chain" id="PRO_0000108591" description="Ribosomal RNA small subunit methyltransferase H">
    <location>
        <begin position="1"/>
        <end position="346"/>
    </location>
</feature>
<feature type="region of interest" description="Disordered" evidence="2">
    <location>
        <begin position="270"/>
        <end position="346"/>
    </location>
</feature>
<feature type="binding site" evidence="1">
    <location>
        <begin position="46"/>
        <end position="48"/>
    </location>
    <ligand>
        <name>S-adenosyl-L-methionine</name>
        <dbReference type="ChEBI" id="CHEBI:59789"/>
    </ligand>
</feature>
<feature type="binding site" evidence="1">
    <location>
        <position position="63"/>
    </location>
    <ligand>
        <name>S-adenosyl-L-methionine</name>
        <dbReference type="ChEBI" id="CHEBI:59789"/>
    </ligand>
</feature>
<feature type="binding site" evidence="1">
    <location>
        <position position="90"/>
    </location>
    <ligand>
        <name>S-adenosyl-L-methionine</name>
        <dbReference type="ChEBI" id="CHEBI:59789"/>
    </ligand>
</feature>
<feature type="binding site" evidence="1">
    <location>
        <position position="113"/>
    </location>
    <ligand>
        <name>S-adenosyl-L-methionine</name>
        <dbReference type="ChEBI" id="CHEBI:59789"/>
    </ligand>
</feature>
<feature type="binding site" evidence="1">
    <location>
        <position position="120"/>
    </location>
    <ligand>
        <name>S-adenosyl-L-methionine</name>
        <dbReference type="ChEBI" id="CHEBI:59789"/>
    </ligand>
</feature>
<sequence>MASLGGDNSQAEGAEVRHVPVLIAEVIDALKPAPGAVIVDGTFGAGGYTRRILETGADVIAIDRDPTAIEAGRAMEKEFPGRLNLVESRFSALDEAVARMSGAGKKVDGVVLDIGVSSMQIDEAERGFSFQKDGPLDMRMSSRGPSAADAVNRLKTGDLARIFNFLGEERHAGRIARMIEKRRAAKPFTRTLDLANAIETLVGRNPKDRIHPATRVFQALRVYVNDELGELARALLAAERILKPGGRLVVVTFHSLEDRMVKRFFADRAGGSAGSRHMPETHMRLPSFTPAVKGAVGPTPEEEERNPRARSAKLRAGIRTENPPLEDDLSLFGLPKLPETNELARS</sequence>
<dbReference type="EC" id="2.1.1.199" evidence="1"/>
<dbReference type="EMBL" id="AE008917">
    <property type="protein sequence ID" value="AAL51752.1"/>
    <property type="molecule type" value="Genomic_DNA"/>
</dbReference>
<dbReference type="PIR" id="AE3323">
    <property type="entry name" value="AE3323"/>
</dbReference>
<dbReference type="SMR" id="P65427"/>
<dbReference type="KEGG" id="bme:BMEI0571"/>
<dbReference type="eggNOG" id="COG0275">
    <property type="taxonomic scope" value="Bacteria"/>
</dbReference>
<dbReference type="Proteomes" id="UP000000419">
    <property type="component" value="Chromosome I"/>
</dbReference>
<dbReference type="GO" id="GO:0005737">
    <property type="term" value="C:cytoplasm"/>
    <property type="evidence" value="ECO:0007669"/>
    <property type="project" value="UniProtKB-SubCell"/>
</dbReference>
<dbReference type="GO" id="GO:0071424">
    <property type="term" value="F:rRNA (cytosine-N4-)-methyltransferase activity"/>
    <property type="evidence" value="ECO:0007669"/>
    <property type="project" value="UniProtKB-UniRule"/>
</dbReference>
<dbReference type="GO" id="GO:0070475">
    <property type="term" value="P:rRNA base methylation"/>
    <property type="evidence" value="ECO:0007669"/>
    <property type="project" value="UniProtKB-UniRule"/>
</dbReference>
<dbReference type="CDD" id="cd02440">
    <property type="entry name" value="AdoMet_MTases"/>
    <property type="match status" value="1"/>
</dbReference>
<dbReference type="Gene3D" id="1.10.150.170">
    <property type="entry name" value="Putative methyltransferase TM0872, insert domain"/>
    <property type="match status" value="1"/>
</dbReference>
<dbReference type="Gene3D" id="3.40.50.150">
    <property type="entry name" value="Vaccinia Virus protein VP39"/>
    <property type="match status" value="1"/>
</dbReference>
<dbReference type="HAMAP" id="MF_01007">
    <property type="entry name" value="16SrRNA_methyltr_H"/>
    <property type="match status" value="1"/>
</dbReference>
<dbReference type="InterPro" id="IPR002903">
    <property type="entry name" value="RsmH"/>
</dbReference>
<dbReference type="InterPro" id="IPR023397">
    <property type="entry name" value="SAM-dep_MeTrfase_MraW_recog"/>
</dbReference>
<dbReference type="InterPro" id="IPR029063">
    <property type="entry name" value="SAM-dependent_MTases_sf"/>
</dbReference>
<dbReference type="NCBIfam" id="TIGR00006">
    <property type="entry name" value="16S rRNA (cytosine(1402)-N(4))-methyltransferase RsmH"/>
    <property type="match status" value="1"/>
</dbReference>
<dbReference type="PANTHER" id="PTHR11265:SF0">
    <property type="entry name" value="12S RRNA N4-METHYLCYTIDINE METHYLTRANSFERASE"/>
    <property type="match status" value="1"/>
</dbReference>
<dbReference type="PANTHER" id="PTHR11265">
    <property type="entry name" value="S-ADENOSYL-METHYLTRANSFERASE MRAW"/>
    <property type="match status" value="1"/>
</dbReference>
<dbReference type="Pfam" id="PF01795">
    <property type="entry name" value="Methyltransf_5"/>
    <property type="match status" value="1"/>
</dbReference>
<dbReference type="PIRSF" id="PIRSF004486">
    <property type="entry name" value="MraW"/>
    <property type="match status" value="1"/>
</dbReference>
<dbReference type="SUPFAM" id="SSF81799">
    <property type="entry name" value="Putative methyltransferase TM0872, insert domain"/>
    <property type="match status" value="1"/>
</dbReference>
<dbReference type="SUPFAM" id="SSF53335">
    <property type="entry name" value="S-adenosyl-L-methionine-dependent methyltransferases"/>
    <property type="match status" value="1"/>
</dbReference>
<accession>P65427</accession>
<accession>Q8YI74</accession>
<comment type="function">
    <text evidence="1">Specifically methylates the N4 position of cytidine in position 1402 (C1402) of 16S rRNA.</text>
</comment>
<comment type="catalytic activity">
    <reaction evidence="1">
        <text>cytidine(1402) in 16S rRNA + S-adenosyl-L-methionine = N(4)-methylcytidine(1402) in 16S rRNA + S-adenosyl-L-homocysteine + H(+)</text>
        <dbReference type="Rhea" id="RHEA:42928"/>
        <dbReference type="Rhea" id="RHEA-COMP:10286"/>
        <dbReference type="Rhea" id="RHEA-COMP:10287"/>
        <dbReference type="ChEBI" id="CHEBI:15378"/>
        <dbReference type="ChEBI" id="CHEBI:57856"/>
        <dbReference type="ChEBI" id="CHEBI:59789"/>
        <dbReference type="ChEBI" id="CHEBI:74506"/>
        <dbReference type="ChEBI" id="CHEBI:82748"/>
        <dbReference type="EC" id="2.1.1.199"/>
    </reaction>
</comment>
<comment type="subcellular location">
    <subcellularLocation>
        <location evidence="1">Cytoplasm</location>
    </subcellularLocation>
</comment>
<comment type="similarity">
    <text evidence="1">Belongs to the methyltransferase superfamily. RsmH family.</text>
</comment>
<reference key="1">
    <citation type="journal article" date="2002" name="Proc. Natl. Acad. Sci. U.S.A.">
        <title>The genome sequence of the facultative intracellular pathogen Brucella melitensis.</title>
        <authorList>
            <person name="DelVecchio V.G."/>
            <person name="Kapatral V."/>
            <person name="Redkar R.J."/>
            <person name="Patra G."/>
            <person name="Mujer C."/>
            <person name="Los T."/>
            <person name="Ivanova N."/>
            <person name="Anderson I."/>
            <person name="Bhattacharyya A."/>
            <person name="Lykidis A."/>
            <person name="Reznik G."/>
            <person name="Jablonski L."/>
            <person name="Larsen N."/>
            <person name="D'Souza M."/>
            <person name="Bernal A."/>
            <person name="Mazur M."/>
            <person name="Goltsman E."/>
            <person name="Selkov E."/>
            <person name="Elzer P.H."/>
            <person name="Hagius S."/>
            <person name="O'Callaghan D."/>
            <person name="Letesson J.-J."/>
            <person name="Haselkorn R."/>
            <person name="Kyrpides N.C."/>
            <person name="Overbeek R."/>
        </authorList>
    </citation>
    <scope>NUCLEOTIDE SEQUENCE [LARGE SCALE GENOMIC DNA]</scope>
    <source>
        <strain>ATCC 23456 / CCUG 17765 / NCTC 10094 / 16M</strain>
    </source>
</reference>
<gene>
    <name evidence="1" type="primary">rsmH</name>
    <name type="synonym">mraW</name>
    <name type="ordered locus">BMEI0571</name>
</gene>
<keyword id="KW-0963">Cytoplasm</keyword>
<keyword id="KW-0489">Methyltransferase</keyword>
<keyword id="KW-0698">rRNA processing</keyword>
<keyword id="KW-0949">S-adenosyl-L-methionine</keyword>
<keyword id="KW-0808">Transferase</keyword>
<evidence type="ECO:0000255" key="1">
    <source>
        <dbReference type="HAMAP-Rule" id="MF_01007"/>
    </source>
</evidence>
<evidence type="ECO:0000256" key="2">
    <source>
        <dbReference type="SAM" id="MobiDB-lite"/>
    </source>
</evidence>
<name>RSMH_BRUME</name>
<organism>
    <name type="scientific">Brucella melitensis biotype 1 (strain ATCC 23456 / CCUG 17765 / NCTC 10094 / 16M)</name>
    <dbReference type="NCBI Taxonomy" id="224914"/>
    <lineage>
        <taxon>Bacteria</taxon>
        <taxon>Pseudomonadati</taxon>
        <taxon>Pseudomonadota</taxon>
        <taxon>Alphaproteobacteria</taxon>
        <taxon>Hyphomicrobiales</taxon>
        <taxon>Brucellaceae</taxon>
        <taxon>Brucella/Ochrobactrum group</taxon>
        <taxon>Brucella</taxon>
    </lineage>
</organism>
<proteinExistence type="inferred from homology"/>
<protein>
    <recommendedName>
        <fullName evidence="1">Ribosomal RNA small subunit methyltransferase H</fullName>
        <ecNumber evidence="1">2.1.1.199</ecNumber>
    </recommendedName>
    <alternativeName>
        <fullName evidence="1">16S rRNA m(4)C1402 methyltransferase</fullName>
    </alternativeName>
    <alternativeName>
        <fullName evidence="1">rRNA (cytosine-N(4)-)-methyltransferase RsmH</fullName>
    </alternativeName>
</protein>